<gene>
    <name evidence="1" type="primary">gfcR</name>
    <name type="ordered locus">Ta1164</name>
</gene>
<dbReference type="EMBL" id="AL445066">
    <property type="protein sequence ID" value="CAC12289.1"/>
    <property type="molecule type" value="Genomic_DNA"/>
</dbReference>
<dbReference type="RefSeq" id="WP_010901571.1">
    <property type="nucleotide sequence ID" value="NC_002578.1"/>
</dbReference>
<dbReference type="SMR" id="Q9HJ11"/>
<dbReference type="STRING" id="273075.gene:9572385"/>
<dbReference type="PaxDb" id="273075-Ta1164"/>
<dbReference type="EnsemblBacteria" id="CAC12289">
    <property type="protein sequence ID" value="CAC12289"/>
    <property type="gene ID" value="CAC12289"/>
</dbReference>
<dbReference type="KEGG" id="tac:Ta1164"/>
<dbReference type="eggNOG" id="arCOG00028">
    <property type="taxonomic scope" value="Archaea"/>
</dbReference>
<dbReference type="HOGENOM" id="CLU_111001_0_0_2"/>
<dbReference type="InParanoid" id="Q9HJ11"/>
<dbReference type="OrthoDB" id="68893at2157"/>
<dbReference type="Proteomes" id="UP000001024">
    <property type="component" value="Chromosome"/>
</dbReference>
<dbReference type="GO" id="GO:0003677">
    <property type="term" value="F:DNA binding"/>
    <property type="evidence" value="ECO:0007669"/>
    <property type="project" value="UniProtKB-UniRule"/>
</dbReference>
<dbReference type="GO" id="GO:0004588">
    <property type="term" value="F:orotate phosphoribosyltransferase activity"/>
    <property type="evidence" value="ECO:0007669"/>
    <property type="project" value="TreeGrafter"/>
</dbReference>
<dbReference type="GO" id="GO:0019856">
    <property type="term" value="P:pyrimidine nucleobase biosynthetic process"/>
    <property type="evidence" value="ECO:0007669"/>
    <property type="project" value="TreeGrafter"/>
</dbReference>
<dbReference type="GO" id="GO:0010468">
    <property type="term" value="P:regulation of gene expression"/>
    <property type="evidence" value="ECO:0007669"/>
    <property type="project" value="UniProtKB-UniRule"/>
</dbReference>
<dbReference type="GO" id="GO:0006222">
    <property type="term" value="P:UMP biosynthetic process"/>
    <property type="evidence" value="ECO:0007669"/>
    <property type="project" value="TreeGrafter"/>
</dbReference>
<dbReference type="CDD" id="cd06223">
    <property type="entry name" value="PRTases_typeI"/>
    <property type="match status" value="1"/>
</dbReference>
<dbReference type="Gene3D" id="3.40.50.2020">
    <property type="match status" value="1"/>
</dbReference>
<dbReference type="HAMAP" id="MF_01214">
    <property type="entry name" value="GfcR"/>
    <property type="match status" value="1"/>
</dbReference>
<dbReference type="InterPro" id="IPR022854">
    <property type="entry name" value="GfcR-like"/>
</dbReference>
<dbReference type="InterPro" id="IPR000836">
    <property type="entry name" value="PRibTrfase_dom"/>
</dbReference>
<dbReference type="InterPro" id="IPR029057">
    <property type="entry name" value="PRTase-like"/>
</dbReference>
<dbReference type="NCBIfam" id="NF002620">
    <property type="entry name" value="PRK02277.1"/>
    <property type="match status" value="1"/>
</dbReference>
<dbReference type="PANTHER" id="PTHR19278">
    <property type="entry name" value="OROTATE PHOSPHORIBOSYLTRANSFERASE"/>
    <property type="match status" value="1"/>
</dbReference>
<dbReference type="PANTHER" id="PTHR19278:SF41">
    <property type="entry name" value="PYRE-LIKE PROTEIN"/>
    <property type="match status" value="1"/>
</dbReference>
<dbReference type="Pfam" id="PF00156">
    <property type="entry name" value="Pribosyltran"/>
    <property type="match status" value="1"/>
</dbReference>
<dbReference type="SUPFAM" id="SSF53271">
    <property type="entry name" value="PRTase-like"/>
    <property type="match status" value="1"/>
</dbReference>
<evidence type="ECO:0000255" key="1">
    <source>
        <dbReference type="HAMAP-Rule" id="MF_01214"/>
    </source>
</evidence>
<feature type="chain" id="PRO_0000110813" description="Transcriptional regulator GfcR">
    <location>
        <begin position="1"/>
        <end position="198"/>
    </location>
</feature>
<comment type="domain">
    <text evidence="1">Contains an N-terminal DNA-binding winged helix-turn-helix domain and a C-terminal regulatory domain (or effector binding domain) resembling phosphoribosyltransferase (PRT) domain.</text>
</comment>
<comment type="similarity">
    <text evidence="1">Belongs to the purine/pyrimidine phosphoribosyltransferase family. GfcR subfamily.</text>
</comment>
<proteinExistence type="inferred from homology"/>
<organism>
    <name type="scientific">Thermoplasma acidophilum (strain ATCC 25905 / DSM 1728 / JCM 9062 / NBRC 15155 / AMRC-C165)</name>
    <dbReference type="NCBI Taxonomy" id="273075"/>
    <lineage>
        <taxon>Archaea</taxon>
        <taxon>Methanobacteriati</taxon>
        <taxon>Thermoplasmatota</taxon>
        <taxon>Thermoplasmata</taxon>
        <taxon>Thermoplasmatales</taxon>
        <taxon>Thermoplasmataceae</taxon>
        <taxon>Thermoplasma</taxon>
    </lineage>
</organism>
<protein>
    <recommendedName>
        <fullName evidence="1">Transcriptional regulator GfcR</fullName>
    </recommendedName>
</protein>
<sequence length="198" mass="21875">MKSIEELYKRALELKNKGMSDKEISTELHLSVNTVTWLLSKEFLKEGAVQDVKIGWRSVGVFGSRIISIAEIMSDIIREEMNKNSFEVDSILGIAINGIPYATLVSYLMDKELIVYRPHPARKEGVFSSNFASVEGKRVVIIDDVASTGETMRRTITDVTKEGGKPVLCVLLASKMSVNDLNGVPVRSLIRTQVIGGS</sequence>
<name>GFCR_THEAC</name>
<reference key="1">
    <citation type="journal article" date="2000" name="Nature">
        <title>The genome sequence of the thermoacidophilic scavenger Thermoplasma acidophilum.</title>
        <authorList>
            <person name="Ruepp A."/>
            <person name="Graml W."/>
            <person name="Santos-Martinez M.-L."/>
            <person name="Koretke K.K."/>
            <person name="Volker C."/>
            <person name="Mewes H.-W."/>
            <person name="Frishman D."/>
            <person name="Stocker S."/>
            <person name="Lupas A.N."/>
            <person name="Baumeister W."/>
        </authorList>
    </citation>
    <scope>NUCLEOTIDE SEQUENCE [LARGE SCALE GENOMIC DNA]</scope>
    <source>
        <strain>ATCC 25905 / DSM 1728 / JCM 9062 / NBRC 15155 / AMRC-C165</strain>
    </source>
</reference>
<accession>Q9HJ11</accession>
<keyword id="KW-0238">DNA-binding</keyword>
<keyword id="KW-1185">Reference proteome</keyword>
<keyword id="KW-0804">Transcription</keyword>
<keyword id="KW-0805">Transcription regulation</keyword>